<keyword id="KW-0963">Cytoplasm</keyword>
<keyword id="KW-0378">Hydrolase</keyword>
<keyword id="KW-0546">Nucleotide metabolism</keyword>
<organism>
    <name type="scientific">Rickettsia peacockii (strain Rustic)</name>
    <dbReference type="NCBI Taxonomy" id="562019"/>
    <lineage>
        <taxon>Bacteria</taxon>
        <taxon>Pseudomonadati</taxon>
        <taxon>Pseudomonadota</taxon>
        <taxon>Alphaproteobacteria</taxon>
        <taxon>Rickettsiales</taxon>
        <taxon>Rickettsiaceae</taxon>
        <taxon>Rickettsieae</taxon>
        <taxon>Rickettsia</taxon>
        <taxon>spotted fever group</taxon>
    </lineage>
</organism>
<sequence length="215" mass="23808">MKQNRKNLPIILASSSPARIELLNRIKIIPSQIIPADIDETPNLRELPAPLAIRLAYEKAIKIASQIEESAIIIAADTVAAVGRRILPKATTYEEVKNCIKMLSGRRHRVYTGLCIIKKENDQLTVRQKIVQTIVKFKKLSDEEINFYCSLDEGIDKAGGCKISGYAEAFISFISGSYSNVMGLPLFETVNALTSLGFRCSSIMPAKMNYCHSAT</sequence>
<feature type="chain" id="PRO_1000211774" description="Nucleoside triphosphate pyrophosphatase">
    <location>
        <begin position="1"/>
        <end position="215"/>
    </location>
</feature>
<feature type="active site" description="Proton acceptor" evidence="1">
    <location>
        <position position="77"/>
    </location>
</feature>
<gene>
    <name type="ordered locus">RPR_05215</name>
</gene>
<accession>C4K258</accession>
<dbReference type="EC" id="3.6.1.9" evidence="1"/>
<dbReference type="EMBL" id="CP001227">
    <property type="protein sequence ID" value="ACR47656.1"/>
    <property type="molecule type" value="Genomic_DNA"/>
</dbReference>
<dbReference type="RefSeq" id="WP_012151371.1">
    <property type="nucleotide sequence ID" value="NC_012730.1"/>
</dbReference>
<dbReference type="SMR" id="C4K258"/>
<dbReference type="GeneID" id="79937868"/>
<dbReference type="KEGG" id="rpk:RPR_05215"/>
<dbReference type="HOGENOM" id="CLU_040416_2_0_5"/>
<dbReference type="Proteomes" id="UP000005015">
    <property type="component" value="Chromosome"/>
</dbReference>
<dbReference type="GO" id="GO:0005737">
    <property type="term" value="C:cytoplasm"/>
    <property type="evidence" value="ECO:0007669"/>
    <property type="project" value="UniProtKB-SubCell"/>
</dbReference>
<dbReference type="GO" id="GO:0047429">
    <property type="term" value="F:nucleoside triphosphate diphosphatase activity"/>
    <property type="evidence" value="ECO:0007669"/>
    <property type="project" value="UniProtKB-EC"/>
</dbReference>
<dbReference type="GO" id="GO:0009117">
    <property type="term" value="P:nucleotide metabolic process"/>
    <property type="evidence" value="ECO:0007669"/>
    <property type="project" value="UniProtKB-KW"/>
</dbReference>
<dbReference type="CDD" id="cd00555">
    <property type="entry name" value="Maf"/>
    <property type="match status" value="1"/>
</dbReference>
<dbReference type="Gene3D" id="3.90.950.10">
    <property type="match status" value="1"/>
</dbReference>
<dbReference type="HAMAP" id="MF_00528">
    <property type="entry name" value="Maf"/>
    <property type="match status" value="1"/>
</dbReference>
<dbReference type="InterPro" id="IPR029001">
    <property type="entry name" value="ITPase-like_fam"/>
</dbReference>
<dbReference type="InterPro" id="IPR003697">
    <property type="entry name" value="Maf-like"/>
</dbReference>
<dbReference type="NCBIfam" id="TIGR00172">
    <property type="entry name" value="maf"/>
    <property type="match status" value="1"/>
</dbReference>
<dbReference type="PANTHER" id="PTHR43213">
    <property type="entry name" value="BIFUNCTIONAL DTTP/UTP PYROPHOSPHATASE/METHYLTRANSFERASE PROTEIN-RELATED"/>
    <property type="match status" value="1"/>
</dbReference>
<dbReference type="PANTHER" id="PTHR43213:SF5">
    <property type="entry name" value="BIFUNCTIONAL DTTP_UTP PYROPHOSPHATASE_METHYLTRANSFERASE PROTEIN-RELATED"/>
    <property type="match status" value="1"/>
</dbReference>
<dbReference type="Pfam" id="PF02545">
    <property type="entry name" value="Maf"/>
    <property type="match status" value="1"/>
</dbReference>
<dbReference type="PIRSF" id="PIRSF006305">
    <property type="entry name" value="Maf"/>
    <property type="match status" value="1"/>
</dbReference>
<dbReference type="SUPFAM" id="SSF52972">
    <property type="entry name" value="ITPase-like"/>
    <property type="match status" value="1"/>
</dbReference>
<comment type="function">
    <text evidence="1">Nucleoside triphosphate pyrophosphatase. May have a dual role in cell division arrest and in preventing the incorporation of modified nucleotides into cellular nucleic acids.</text>
</comment>
<comment type="catalytic activity">
    <reaction evidence="1">
        <text>a ribonucleoside 5'-triphosphate + H2O = a ribonucleoside 5'-phosphate + diphosphate + H(+)</text>
        <dbReference type="Rhea" id="RHEA:23996"/>
        <dbReference type="ChEBI" id="CHEBI:15377"/>
        <dbReference type="ChEBI" id="CHEBI:15378"/>
        <dbReference type="ChEBI" id="CHEBI:33019"/>
        <dbReference type="ChEBI" id="CHEBI:58043"/>
        <dbReference type="ChEBI" id="CHEBI:61557"/>
        <dbReference type="EC" id="3.6.1.9"/>
    </reaction>
</comment>
<comment type="catalytic activity">
    <reaction evidence="1">
        <text>a 2'-deoxyribonucleoside 5'-triphosphate + H2O = a 2'-deoxyribonucleoside 5'-phosphate + diphosphate + H(+)</text>
        <dbReference type="Rhea" id="RHEA:44644"/>
        <dbReference type="ChEBI" id="CHEBI:15377"/>
        <dbReference type="ChEBI" id="CHEBI:15378"/>
        <dbReference type="ChEBI" id="CHEBI:33019"/>
        <dbReference type="ChEBI" id="CHEBI:61560"/>
        <dbReference type="ChEBI" id="CHEBI:65317"/>
        <dbReference type="EC" id="3.6.1.9"/>
    </reaction>
</comment>
<comment type="cofactor">
    <cofactor evidence="1">
        <name>a divalent metal cation</name>
        <dbReference type="ChEBI" id="CHEBI:60240"/>
    </cofactor>
</comment>
<comment type="subcellular location">
    <subcellularLocation>
        <location evidence="1">Cytoplasm</location>
    </subcellularLocation>
</comment>
<comment type="similarity">
    <text evidence="1">Belongs to the Maf family.</text>
</comment>
<proteinExistence type="inferred from homology"/>
<evidence type="ECO:0000255" key="1">
    <source>
        <dbReference type="HAMAP-Rule" id="MF_00528"/>
    </source>
</evidence>
<protein>
    <recommendedName>
        <fullName evidence="1">Nucleoside triphosphate pyrophosphatase</fullName>
        <ecNumber evidence="1">3.6.1.9</ecNumber>
    </recommendedName>
    <alternativeName>
        <fullName evidence="1">Nucleotide pyrophosphatase</fullName>
        <shortName evidence="1">Nucleotide PPase</shortName>
    </alternativeName>
</protein>
<name>NTPP_RICPU</name>
<reference key="1">
    <citation type="journal article" date="2009" name="PLoS ONE">
        <title>Genome sequence of the endosymbiont Rickettsia peacockii and comparison with virulent Rickettsia rickettsii: identification of virulence factors.</title>
        <authorList>
            <person name="Felsheim R.F."/>
            <person name="Kurtti T.J."/>
            <person name="Munderloh U.G."/>
        </authorList>
    </citation>
    <scope>NUCLEOTIDE SEQUENCE [LARGE SCALE GENOMIC DNA]</scope>
    <source>
        <strain>Rustic</strain>
    </source>
</reference>